<dbReference type="EC" id="1.1.1.267" evidence="1"/>
<dbReference type="EMBL" id="CP000563">
    <property type="protein sequence ID" value="ABN60974.1"/>
    <property type="molecule type" value="Genomic_DNA"/>
</dbReference>
<dbReference type="RefSeq" id="WP_011846351.1">
    <property type="nucleotide sequence ID" value="NC_009052.1"/>
</dbReference>
<dbReference type="SMR" id="A3D2L1"/>
<dbReference type="STRING" id="325240.Sbal_1456"/>
<dbReference type="KEGG" id="sbl:Sbal_1456"/>
<dbReference type="HOGENOM" id="CLU_035714_0_1_6"/>
<dbReference type="OrthoDB" id="9806546at2"/>
<dbReference type="UniPathway" id="UPA00056">
    <property type="reaction ID" value="UER00092"/>
</dbReference>
<dbReference type="Proteomes" id="UP000001557">
    <property type="component" value="Chromosome"/>
</dbReference>
<dbReference type="GO" id="GO:0030604">
    <property type="term" value="F:1-deoxy-D-xylulose-5-phosphate reductoisomerase activity"/>
    <property type="evidence" value="ECO:0007669"/>
    <property type="project" value="UniProtKB-UniRule"/>
</dbReference>
<dbReference type="GO" id="GO:0030145">
    <property type="term" value="F:manganese ion binding"/>
    <property type="evidence" value="ECO:0007669"/>
    <property type="project" value="TreeGrafter"/>
</dbReference>
<dbReference type="GO" id="GO:0070402">
    <property type="term" value="F:NADPH binding"/>
    <property type="evidence" value="ECO:0007669"/>
    <property type="project" value="InterPro"/>
</dbReference>
<dbReference type="GO" id="GO:0051484">
    <property type="term" value="P:isopentenyl diphosphate biosynthetic process, methylerythritol 4-phosphate pathway involved in terpenoid biosynthetic process"/>
    <property type="evidence" value="ECO:0007669"/>
    <property type="project" value="TreeGrafter"/>
</dbReference>
<dbReference type="FunFam" id="1.10.1740.10:FF:000004">
    <property type="entry name" value="1-deoxy-D-xylulose 5-phosphate reductoisomerase"/>
    <property type="match status" value="1"/>
</dbReference>
<dbReference type="FunFam" id="3.40.50.720:FF:000045">
    <property type="entry name" value="1-deoxy-D-xylulose 5-phosphate reductoisomerase"/>
    <property type="match status" value="1"/>
</dbReference>
<dbReference type="Gene3D" id="1.10.1740.10">
    <property type="match status" value="1"/>
</dbReference>
<dbReference type="Gene3D" id="3.40.50.720">
    <property type="entry name" value="NAD(P)-binding Rossmann-like Domain"/>
    <property type="match status" value="1"/>
</dbReference>
<dbReference type="HAMAP" id="MF_00183">
    <property type="entry name" value="DXP_reductoisom"/>
    <property type="match status" value="1"/>
</dbReference>
<dbReference type="InterPro" id="IPR003821">
    <property type="entry name" value="DXP_reductoisomerase"/>
</dbReference>
<dbReference type="InterPro" id="IPR013644">
    <property type="entry name" value="DXP_reductoisomerase_C"/>
</dbReference>
<dbReference type="InterPro" id="IPR013512">
    <property type="entry name" value="DXP_reductoisomerase_N"/>
</dbReference>
<dbReference type="InterPro" id="IPR026877">
    <property type="entry name" value="DXPR_C"/>
</dbReference>
<dbReference type="InterPro" id="IPR036169">
    <property type="entry name" value="DXPR_C_sf"/>
</dbReference>
<dbReference type="InterPro" id="IPR036291">
    <property type="entry name" value="NAD(P)-bd_dom_sf"/>
</dbReference>
<dbReference type="NCBIfam" id="TIGR00243">
    <property type="entry name" value="Dxr"/>
    <property type="match status" value="1"/>
</dbReference>
<dbReference type="NCBIfam" id="NF003938">
    <property type="entry name" value="PRK05447.1-1"/>
    <property type="match status" value="1"/>
</dbReference>
<dbReference type="NCBIfam" id="NF009114">
    <property type="entry name" value="PRK12464.1"/>
    <property type="match status" value="1"/>
</dbReference>
<dbReference type="PANTHER" id="PTHR30525">
    <property type="entry name" value="1-DEOXY-D-XYLULOSE 5-PHOSPHATE REDUCTOISOMERASE"/>
    <property type="match status" value="1"/>
</dbReference>
<dbReference type="PANTHER" id="PTHR30525:SF0">
    <property type="entry name" value="1-DEOXY-D-XYLULOSE 5-PHOSPHATE REDUCTOISOMERASE, CHLOROPLASTIC"/>
    <property type="match status" value="1"/>
</dbReference>
<dbReference type="Pfam" id="PF08436">
    <property type="entry name" value="DXP_redisom_C"/>
    <property type="match status" value="1"/>
</dbReference>
<dbReference type="Pfam" id="PF02670">
    <property type="entry name" value="DXP_reductoisom"/>
    <property type="match status" value="1"/>
</dbReference>
<dbReference type="Pfam" id="PF13288">
    <property type="entry name" value="DXPR_C"/>
    <property type="match status" value="1"/>
</dbReference>
<dbReference type="PIRSF" id="PIRSF006205">
    <property type="entry name" value="Dxp_reductismrs"/>
    <property type="match status" value="1"/>
</dbReference>
<dbReference type="SUPFAM" id="SSF69055">
    <property type="entry name" value="1-deoxy-D-xylulose-5-phosphate reductoisomerase, C-terminal domain"/>
    <property type="match status" value="1"/>
</dbReference>
<dbReference type="SUPFAM" id="SSF55347">
    <property type="entry name" value="Glyceraldehyde-3-phosphate dehydrogenase-like, C-terminal domain"/>
    <property type="match status" value="1"/>
</dbReference>
<dbReference type="SUPFAM" id="SSF51735">
    <property type="entry name" value="NAD(P)-binding Rossmann-fold domains"/>
    <property type="match status" value="1"/>
</dbReference>
<sequence length="396" mass="42047">MQNMVILGATGSIGASTLSVISANPFAYSVYGLVANASVDKMLALCVAHKPKVAHMVDEAAAKQLRAVLPATLNIQVTTGMNDLLGLVTAAEVDTVMAAIVGAAGLVPTLEAVKAGKRVLLANKEALVMSGELFIEATKRSGAVLLPVDSEHNAIFQCLPQEVQANLGRCDLAASGISHILLTGSGGPFLRSDLATLAAMTPAQACKHPNWSMGPKISVDSATMMNKGLEFIEARWLFNTQAEQLKVVIHPQSVIHSMVQYRDGSVIAQMGNPDMRTPIAHCMAYPQRIHSGVEPLDFFKVGQLSFYEPDFERFPCLALAMDACAQGQEATTVLNAANEIAVEAFLQGQIGFTQIAKVNEACLVTVPKCPMGSIEDILALDAQTRVYARETLASIA</sequence>
<keyword id="KW-0414">Isoprene biosynthesis</keyword>
<keyword id="KW-0464">Manganese</keyword>
<keyword id="KW-0479">Metal-binding</keyword>
<keyword id="KW-0521">NADP</keyword>
<keyword id="KW-0560">Oxidoreductase</keyword>
<keyword id="KW-1185">Reference proteome</keyword>
<proteinExistence type="inferred from homology"/>
<protein>
    <recommendedName>
        <fullName evidence="1">1-deoxy-D-xylulose 5-phosphate reductoisomerase</fullName>
        <shortName evidence="1">DXP reductoisomerase</shortName>
        <ecNumber evidence="1">1.1.1.267</ecNumber>
    </recommendedName>
    <alternativeName>
        <fullName evidence="1">1-deoxyxylulose-5-phosphate reductoisomerase</fullName>
    </alternativeName>
    <alternativeName>
        <fullName evidence="1">2-C-methyl-D-erythritol 4-phosphate synthase</fullName>
    </alternativeName>
</protein>
<gene>
    <name evidence="1" type="primary">dxr</name>
    <name type="ordered locus">Sbal_1456</name>
</gene>
<accession>A3D2L1</accession>
<reference key="1">
    <citation type="submission" date="2007-02" db="EMBL/GenBank/DDBJ databases">
        <title>Complete sequence of chromosome of Shewanella baltica OS155.</title>
        <authorList>
            <consortium name="US DOE Joint Genome Institute"/>
            <person name="Copeland A."/>
            <person name="Lucas S."/>
            <person name="Lapidus A."/>
            <person name="Barry K."/>
            <person name="Detter J.C."/>
            <person name="Glavina del Rio T."/>
            <person name="Hammon N."/>
            <person name="Israni S."/>
            <person name="Dalin E."/>
            <person name="Tice H."/>
            <person name="Pitluck S."/>
            <person name="Sims D.R."/>
            <person name="Brettin T."/>
            <person name="Bruce D."/>
            <person name="Han C."/>
            <person name="Tapia R."/>
            <person name="Brainard J."/>
            <person name="Schmutz J."/>
            <person name="Larimer F."/>
            <person name="Land M."/>
            <person name="Hauser L."/>
            <person name="Kyrpides N."/>
            <person name="Mikhailova N."/>
            <person name="Brettar I."/>
            <person name="Klappenbach J."/>
            <person name="Konstantinidis K."/>
            <person name="Rodrigues J."/>
            <person name="Tiedje J."/>
            <person name="Richardson P."/>
        </authorList>
    </citation>
    <scope>NUCLEOTIDE SEQUENCE [LARGE SCALE GENOMIC DNA]</scope>
    <source>
        <strain>OS155 / ATCC BAA-1091</strain>
    </source>
</reference>
<evidence type="ECO:0000255" key="1">
    <source>
        <dbReference type="HAMAP-Rule" id="MF_00183"/>
    </source>
</evidence>
<organism>
    <name type="scientific">Shewanella baltica (strain OS155 / ATCC BAA-1091)</name>
    <dbReference type="NCBI Taxonomy" id="325240"/>
    <lineage>
        <taxon>Bacteria</taxon>
        <taxon>Pseudomonadati</taxon>
        <taxon>Pseudomonadota</taxon>
        <taxon>Gammaproteobacteria</taxon>
        <taxon>Alteromonadales</taxon>
        <taxon>Shewanellaceae</taxon>
        <taxon>Shewanella</taxon>
    </lineage>
</organism>
<comment type="function">
    <text evidence="1">Catalyzes the NADPH-dependent rearrangement and reduction of 1-deoxy-D-xylulose-5-phosphate (DXP) to 2-C-methyl-D-erythritol 4-phosphate (MEP).</text>
</comment>
<comment type="catalytic activity">
    <reaction evidence="1">
        <text>2-C-methyl-D-erythritol 4-phosphate + NADP(+) = 1-deoxy-D-xylulose 5-phosphate + NADPH + H(+)</text>
        <dbReference type="Rhea" id="RHEA:13717"/>
        <dbReference type="ChEBI" id="CHEBI:15378"/>
        <dbReference type="ChEBI" id="CHEBI:57783"/>
        <dbReference type="ChEBI" id="CHEBI:57792"/>
        <dbReference type="ChEBI" id="CHEBI:58262"/>
        <dbReference type="ChEBI" id="CHEBI:58349"/>
        <dbReference type="EC" id="1.1.1.267"/>
    </reaction>
    <physiologicalReaction direction="right-to-left" evidence="1">
        <dbReference type="Rhea" id="RHEA:13719"/>
    </physiologicalReaction>
</comment>
<comment type="cofactor">
    <cofactor evidence="1">
        <name>Mg(2+)</name>
        <dbReference type="ChEBI" id="CHEBI:18420"/>
    </cofactor>
    <cofactor evidence="1">
        <name>Mn(2+)</name>
        <dbReference type="ChEBI" id="CHEBI:29035"/>
    </cofactor>
</comment>
<comment type="pathway">
    <text evidence="1">Isoprenoid biosynthesis; isopentenyl diphosphate biosynthesis via DXP pathway; isopentenyl diphosphate from 1-deoxy-D-xylulose 5-phosphate: step 1/6.</text>
</comment>
<comment type="similarity">
    <text evidence="1">Belongs to the DXR family.</text>
</comment>
<name>DXR_SHEB5</name>
<feature type="chain" id="PRO_1000020307" description="1-deoxy-D-xylulose 5-phosphate reductoisomerase">
    <location>
        <begin position="1"/>
        <end position="396"/>
    </location>
</feature>
<feature type="binding site" evidence="1">
    <location>
        <position position="10"/>
    </location>
    <ligand>
        <name>NADPH</name>
        <dbReference type="ChEBI" id="CHEBI:57783"/>
    </ligand>
</feature>
<feature type="binding site" evidence="1">
    <location>
        <position position="11"/>
    </location>
    <ligand>
        <name>NADPH</name>
        <dbReference type="ChEBI" id="CHEBI:57783"/>
    </ligand>
</feature>
<feature type="binding site" evidence="1">
    <location>
        <position position="12"/>
    </location>
    <ligand>
        <name>NADPH</name>
        <dbReference type="ChEBI" id="CHEBI:57783"/>
    </ligand>
</feature>
<feature type="binding site" evidence="1">
    <location>
        <position position="13"/>
    </location>
    <ligand>
        <name>NADPH</name>
        <dbReference type="ChEBI" id="CHEBI:57783"/>
    </ligand>
</feature>
<feature type="binding site" evidence="1">
    <location>
        <position position="123"/>
    </location>
    <ligand>
        <name>NADPH</name>
        <dbReference type="ChEBI" id="CHEBI:57783"/>
    </ligand>
</feature>
<feature type="binding site" evidence="1">
    <location>
        <position position="124"/>
    </location>
    <ligand>
        <name>1-deoxy-D-xylulose 5-phosphate</name>
        <dbReference type="ChEBI" id="CHEBI:57792"/>
    </ligand>
</feature>
<feature type="binding site" evidence="1">
    <location>
        <position position="125"/>
    </location>
    <ligand>
        <name>NADPH</name>
        <dbReference type="ChEBI" id="CHEBI:57783"/>
    </ligand>
</feature>
<feature type="binding site" evidence="1">
    <location>
        <position position="149"/>
    </location>
    <ligand>
        <name>Mn(2+)</name>
        <dbReference type="ChEBI" id="CHEBI:29035"/>
    </ligand>
</feature>
<feature type="binding site" evidence="1">
    <location>
        <position position="150"/>
    </location>
    <ligand>
        <name>1-deoxy-D-xylulose 5-phosphate</name>
        <dbReference type="ChEBI" id="CHEBI:57792"/>
    </ligand>
</feature>
<feature type="binding site" evidence="1">
    <location>
        <position position="151"/>
    </location>
    <ligand>
        <name>1-deoxy-D-xylulose 5-phosphate</name>
        <dbReference type="ChEBI" id="CHEBI:57792"/>
    </ligand>
</feature>
<feature type="binding site" evidence="1">
    <location>
        <position position="151"/>
    </location>
    <ligand>
        <name>Mn(2+)</name>
        <dbReference type="ChEBI" id="CHEBI:29035"/>
    </ligand>
</feature>
<feature type="binding site" evidence="1">
    <location>
        <position position="185"/>
    </location>
    <ligand>
        <name>1-deoxy-D-xylulose 5-phosphate</name>
        <dbReference type="ChEBI" id="CHEBI:57792"/>
    </ligand>
</feature>
<feature type="binding site" evidence="1">
    <location>
        <position position="208"/>
    </location>
    <ligand>
        <name>1-deoxy-D-xylulose 5-phosphate</name>
        <dbReference type="ChEBI" id="CHEBI:57792"/>
    </ligand>
</feature>
<feature type="binding site" evidence="1">
    <location>
        <position position="214"/>
    </location>
    <ligand>
        <name>NADPH</name>
        <dbReference type="ChEBI" id="CHEBI:57783"/>
    </ligand>
</feature>
<feature type="binding site" evidence="1">
    <location>
        <position position="221"/>
    </location>
    <ligand>
        <name>1-deoxy-D-xylulose 5-phosphate</name>
        <dbReference type="ChEBI" id="CHEBI:57792"/>
    </ligand>
</feature>
<feature type="binding site" evidence="1">
    <location>
        <position position="226"/>
    </location>
    <ligand>
        <name>1-deoxy-D-xylulose 5-phosphate</name>
        <dbReference type="ChEBI" id="CHEBI:57792"/>
    </ligand>
</feature>
<feature type="binding site" evidence="1">
    <location>
        <position position="227"/>
    </location>
    <ligand>
        <name>1-deoxy-D-xylulose 5-phosphate</name>
        <dbReference type="ChEBI" id="CHEBI:57792"/>
    </ligand>
</feature>
<feature type="binding site" evidence="1">
    <location>
        <position position="230"/>
    </location>
    <ligand>
        <name>1-deoxy-D-xylulose 5-phosphate</name>
        <dbReference type="ChEBI" id="CHEBI:57792"/>
    </ligand>
</feature>
<feature type="binding site" evidence="1">
    <location>
        <position position="230"/>
    </location>
    <ligand>
        <name>Mn(2+)</name>
        <dbReference type="ChEBI" id="CHEBI:29035"/>
    </ligand>
</feature>